<sequence>MATAAAASTALTGATTAAPKARRRAHLLATRRALAAPIRCSAASPAMPMAPPATPLRPWGPTDPRKGADILVESLERCGVRDVFAYPGGASMEIHQALTRSPVIANHLFRHEQGEAFAASGYARSSGRVGVCIATSGPGATNLVSALADALLDSVPMVAITGQVPRRMIGTDAFQETPIVEVTRSITKHNYLVLDVDDIPRVVQEAFFLASSGRPGPVLVDIPKDIQQQMAVPVWDKPMSLPGYIARLPKPPATELLEQVLRLVGESRRPVLYVGGGCAASGEELRRFVELTGIPVTTTLMGLGNFPSDDPLSLRMLGMHGTVYANYAVDKADLLLALGVRFDDRVTGKIEAFASRAKIVHVDIDPAEIGKNKQPHVSICADVKLALQGMNALLEGSTSKKSFDFGSWNDELDQQKREFPLGYKTSNEEIQPQYAIQVLDELTKGEAIIGTGVGQHQMWAAQYYTYKRPRQWLSSAGLGAMGFGLPAAAGASVANPGVTVVDIDGDGSFLMNVQELAMIRIENLPVKVFVLNNQHLGMVVQWEDRFYKANRAHTYLGNPENESEIYPDFVTIAKGFNIPAVRVTKKNEVRAAIKKMLETPGPYLLDIIVPHQEHVLPMIPSGGAFKDMILDGDGRTVY</sequence>
<proteinExistence type="inferred from homology"/>
<reference key="1">
    <citation type="journal article" date="1992" name="Plant Mol. Biol.">
        <title>Sequence of two acetohydroxyacid synthase genes from Zea mays.</title>
        <authorList>
            <person name="Fang L.Y."/>
            <person name="Gross P.R."/>
            <person name="Chen C.-H."/>
            <person name="Lillis M."/>
        </authorList>
    </citation>
    <scope>NUCLEOTIDE SEQUENCE [GENOMIC DNA]</scope>
</reference>
<evidence type="ECO:0000250" key="1"/>
<evidence type="ECO:0000255" key="2"/>
<evidence type="ECO:0000256" key="3">
    <source>
        <dbReference type="SAM" id="MobiDB-lite"/>
    </source>
</evidence>
<evidence type="ECO:0000305" key="4"/>
<organism>
    <name type="scientific">Zea mays</name>
    <name type="common">Maize</name>
    <dbReference type="NCBI Taxonomy" id="4577"/>
    <lineage>
        <taxon>Eukaryota</taxon>
        <taxon>Viridiplantae</taxon>
        <taxon>Streptophyta</taxon>
        <taxon>Embryophyta</taxon>
        <taxon>Tracheophyta</taxon>
        <taxon>Spermatophyta</taxon>
        <taxon>Magnoliopsida</taxon>
        <taxon>Liliopsida</taxon>
        <taxon>Poales</taxon>
        <taxon>Poaceae</taxon>
        <taxon>PACMAD clade</taxon>
        <taxon>Panicoideae</taxon>
        <taxon>Andropogonodae</taxon>
        <taxon>Andropogoneae</taxon>
        <taxon>Tripsacinae</taxon>
        <taxon>Zea</taxon>
    </lineage>
</organism>
<accession>Q41768</accession>
<dbReference type="EC" id="2.2.1.6"/>
<dbReference type="EMBL" id="X63553">
    <property type="protein sequence ID" value="CAA45116.1"/>
    <property type="molecule type" value="Genomic_DNA"/>
</dbReference>
<dbReference type="PIR" id="S22490">
    <property type="entry name" value="S22490"/>
</dbReference>
<dbReference type="RefSeq" id="NP_001151761.1">
    <property type="nucleotide sequence ID" value="NM_001158289.1"/>
</dbReference>
<dbReference type="SMR" id="Q41768"/>
<dbReference type="FunCoup" id="Q41768">
    <property type="interactions" value="1406"/>
</dbReference>
<dbReference type="STRING" id="4577.Q41768"/>
<dbReference type="ChEMBL" id="CHEMBL2366574"/>
<dbReference type="PaxDb" id="4577-GRMZM2G143008_P01"/>
<dbReference type="EnsemblPlants" id="Zm00001eb241810_T001">
    <property type="protein sequence ID" value="Zm00001eb241810_P001"/>
    <property type="gene ID" value="Zm00001eb241810"/>
</dbReference>
<dbReference type="GeneID" id="100285396"/>
<dbReference type="Gramene" id="Zm00001eb241810_T001">
    <property type="protein sequence ID" value="Zm00001eb241810_P001"/>
    <property type="gene ID" value="Zm00001eb241810"/>
</dbReference>
<dbReference type="KEGG" id="zma:100285396"/>
<dbReference type="eggNOG" id="KOG4166">
    <property type="taxonomic scope" value="Eukaryota"/>
</dbReference>
<dbReference type="HOGENOM" id="CLU_013748_1_2_1"/>
<dbReference type="InParanoid" id="Q41768"/>
<dbReference type="OMA" id="QETDMIG"/>
<dbReference type="OrthoDB" id="16262at2759"/>
<dbReference type="UniPathway" id="UPA00047">
    <property type="reaction ID" value="UER00055"/>
</dbReference>
<dbReference type="UniPathway" id="UPA00049">
    <property type="reaction ID" value="UER00059"/>
</dbReference>
<dbReference type="Proteomes" id="UP000007305">
    <property type="component" value="Chromosome 5"/>
</dbReference>
<dbReference type="ExpressionAtlas" id="Q41768">
    <property type="expression patterns" value="baseline and differential"/>
</dbReference>
<dbReference type="GO" id="GO:0005948">
    <property type="term" value="C:acetolactate synthase complex"/>
    <property type="evidence" value="ECO:0000318"/>
    <property type="project" value="GO_Central"/>
</dbReference>
<dbReference type="GO" id="GO:0009507">
    <property type="term" value="C:chloroplast"/>
    <property type="evidence" value="ECO:0007669"/>
    <property type="project" value="UniProtKB-SubCell"/>
</dbReference>
<dbReference type="GO" id="GO:0003984">
    <property type="term" value="F:acetolactate synthase activity"/>
    <property type="evidence" value="ECO:0000318"/>
    <property type="project" value="GO_Central"/>
</dbReference>
<dbReference type="GO" id="GO:0050660">
    <property type="term" value="F:flavin adenine dinucleotide binding"/>
    <property type="evidence" value="ECO:0000318"/>
    <property type="project" value="GO_Central"/>
</dbReference>
<dbReference type="GO" id="GO:0000287">
    <property type="term" value="F:magnesium ion binding"/>
    <property type="evidence" value="ECO:0007669"/>
    <property type="project" value="InterPro"/>
</dbReference>
<dbReference type="GO" id="GO:0030976">
    <property type="term" value="F:thiamine pyrophosphate binding"/>
    <property type="evidence" value="ECO:0007669"/>
    <property type="project" value="InterPro"/>
</dbReference>
<dbReference type="GO" id="GO:0009097">
    <property type="term" value="P:isoleucine biosynthetic process"/>
    <property type="evidence" value="ECO:0000318"/>
    <property type="project" value="GO_Central"/>
</dbReference>
<dbReference type="GO" id="GO:0009099">
    <property type="term" value="P:L-valine biosynthetic process"/>
    <property type="evidence" value="ECO:0000318"/>
    <property type="project" value="GO_Central"/>
</dbReference>
<dbReference type="GO" id="GO:0009635">
    <property type="term" value="P:response to herbicide"/>
    <property type="evidence" value="ECO:0007669"/>
    <property type="project" value="UniProtKB-KW"/>
</dbReference>
<dbReference type="CDD" id="cd02015">
    <property type="entry name" value="TPP_AHAS"/>
    <property type="match status" value="1"/>
</dbReference>
<dbReference type="CDD" id="cd07035">
    <property type="entry name" value="TPP_PYR_POX_like"/>
    <property type="match status" value="1"/>
</dbReference>
<dbReference type="FunFam" id="3.40.50.1220:FF:000008">
    <property type="entry name" value="Acetolactate synthase"/>
    <property type="match status" value="1"/>
</dbReference>
<dbReference type="FunFam" id="3.40.50.970:FF:000007">
    <property type="entry name" value="Acetolactate synthase"/>
    <property type="match status" value="1"/>
</dbReference>
<dbReference type="FunFam" id="3.40.50.970:FF:000016">
    <property type="entry name" value="Acetolactate synthase"/>
    <property type="match status" value="1"/>
</dbReference>
<dbReference type="Gene3D" id="3.40.50.970">
    <property type="match status" value="2"/>
</dbReference>
<dbReference type="Gene3D" id="3.40.50.1220">
    <property type="entry name" value="TPP-binding domain"/>
    <property type="match status" value="1"/>
</dbReference>
<dbReference type="InterPro" id="IPR012846">
    <property type="entry name" value="Acetolactate_synth_lsu"/>
</dbReference>
<dbReference type="InterPro" id="IPR039368">
    <property type="entry name" value="AHAS_TPP"/>
</dbReference>
<dbReference type="InterPro" id="IPR029035">
    <property type="entry name" value="DHS-like_NAD/FAD-binding_dom"/>
</dbReference>
<dbReference type="InterPro" id="IPR029061">
    <property type="entry name" value="THDP-binding"/>
</dbReference>
<dbReference type="InterPro" id="IPR012000">
    <property type="entry name" value="Thiamin_PyroP_enz_cen_dom"/>
</dbReference>
<dbReference type="InterPro" id="IPR012001">
    <property type="entry name" value="Thiamin_PyroP_enz_TPP-bd_dom"/>
</dbReference>
<dbReference type="InterPro" id="IPR045229">
    <property type="entry name" value="TPP_enz"/>
</dbReference>
<dbReference type="InterPro" id="IPR011766">
    <property type="entry name" value="TPP_enzyme_TPP-bd"/>
</dbReference>
<dbReference type="NCBIfam" id="TIGR00118">
    <property type="entry name" value="acolac_lg"/>
    <property type="match status" value="1"/>
</dbReference>
<dbReference type="PANTHER" id="PTHR18968:SF13">
    <property type="entry name" value="ACETOLACTATE SYNTHASE CATALYTIC SUBUNIT, MITOCHONDRIAL"/>
    <property type="match status" value="1"/>
</dbReference>
<dbReference type="PANTHER" id="PTHR18968">
    <property type="entry name" value="THIAMINE PYROPHOSPHATE ENZYMES"/>
    <property type="match status" value="1"/>
</dbReference>
<dbReference type="Pfam" id="PF02775">
    <property type="entry name" value="TPP_enzyme_C"/>
    <property type="match status" value="1"/>
</dbReference>
<dbReference type="Pfam" id="PF00205">
    <property type="entry name" value="TPP_enzyme_M"/>
    <property type="match status" value="1"/>
</dbReference>
<dbReference type="Pfam" id="PF02776">
    <property type="entry name" value="TPP_enzyme_N"/>
    <property type="match status" value="1"/>
</dbReference>
<dbReference type="SUPFAM" id="SSF52467">
    <property type="entry name" value="DHS-like NAD/FAD-binding domain"/>
    <property type="match status" value="1"/>
</dbReference>
<dbReference type="SUPFAM" id="SSF52518">
    <property type="entry name" value="Thiamin diphosphate-binding fold (THDP-binding)"/>
    <property type="match status" value="2"/>
</dbReference>
<comment type="catalytic activity">
    <reaction>
        <text>2 pyruvate + H(+) = (2S)-2-acetolactate + CO2</text>
        <dbReference type="Rhea" id="RHEA:25249"/>
        <dbReference type="ChEBI" id="CHEBI:15361"/>
        <dbReference type="ChEBI" id="CHEBI:15378"/>
        <dbReference type="ChEBI" id="CHEBI:16526"/>
        <dbReference type="ChEBI" id="CHEBI:58476"/>
        <dbReference type="EC" id="2.2.1.6"/>
    </reaction>
</comment>
<comment type="cofactor">
    <cofactor evidence="1">
        <name>Mg(2+)</name>
        <dbReference type="ChEBI" id="CHEBI:18420"/>
    </cofactor>
    <text evidence="1">Binds 1 Mg(2+) ion per subunit.</text>
</comment>
<comment type="cofactor">
    <cofactor evidence="1">
        <name>thiamine diphosphate</name>
        <dbReference type="ChEBI" id="CHEBI:58937"/>
    </cofactor>
    <text evidence="1">Binds 1 thiamine pyrophosphate per subunit.</text>
</comment>
<comment type="pathway">
    <text>Amino-acid biosynthesis; L-isoleucine biosynthesis; L-isoleucine from 2-oxobutanoate: step 1/4.</text>
</comment>
<comment type="pathway">
    <text>Amino-acid biosynthesis; L-valine biosynthesis; L-valine from pyruvate: step 1/4.</text>
</comment>
<comment type="subcellular location">
    <subcellularLocation>
        <location evidence="1">Plastid</location>
        <location evidence="1">Chloroplast</location>
    </subcellularLocation>
</comment>
<comment type="miscellaneous">
    <text>Acetolactate synthase is the target enzyme for sulfonylurea and imidazolinone herbicides.</text>
</comment>
<comment type="similarity">
    <text evidence="4">Belongs to the TPP enzyme family.</text>
</comment>
<name>ILVB1_MAIZE</name>
<keyword id="KW-0028">Amino-acid biosynthesis</keyword>
<keyword id="KW-0100">Branched-chain amino acid biosynthesis</keyword>
<keyword id="KW-0150">Chloroplast</keyword>
<keyword id="KW-1015">Disulfide bond</keyword>
<keyword id="KW-0274">FAD</keyword>
<keyword id="KW-0285">Flavoprotein</keyword>
<keyword id="KW-0359">Herbicide resistance</keyword>
<keyword id="KW-0460">Magnesium</keyword>
<keyword id="KW-0479">Metal-binding</keyword>
<keyword id="KW-0934">Plastid</keyword>
<keyword id="KW-1185">Reference proteome</keyword>
<keyword id="KW-0786">Thiamine pyrophosphate</keyword>
<keyword id="KW-0808">Transferase</keyword>
<keyword id="KW-0809">Transit peptide</keyword>
<protein>
    <recommendedName>
        <fullName>Acetolactate synthase 1, chloroplastic</fullName>
        <ecNumber>2.2.1.6</ecNumber>
    </recommendedName>
    <alternativeName>
        <fullName>Acetohydroxy-acid synthase 1</fullName>
    </alternativeName>
</protein>
<gene>
    <name type="primary">ALS1</name>
    <name type="synonym">AHAS108</name>
</gene>
<feature type="transit peptide" description="Chloroplast" evidence="2">
    <location>
        <begin position="1"/>
        <end position="39"/>
    </location>
</feature>
<feature type="chain" id="PRO_0000235807" description="Acetolactate synthase 1, chloroplastic">
    <location>
        <begin position="40"/>
        <end position="638"/>
    </location>
</feature>
<feature type="region of interest" description="Disordered" evidence="3">
    <location>
        <begin position="1"/>
        <end position="23"/>
    </location>
</feature>
<feature type="region of interest" description="Thiamine pyrophosphate binding" evidence="1">
    <location>
        <begin position="455"/>
        <end position="535"/>
    </location>
</feature>
<feature type="compositionally biased region" description="Low complexity" evidence="3">
    <location>
        <begin position="1"/>
        <end position="19"/>
    </location>
</feature>
<feature type="binding site" evidence="1">
    <location>
        <position position="112"/>
    </location>
    <ligand>
        <name>thiamine diphosphate</name>
        <dbReference type="ChEBI" id="CHEBI:58937"/>
    </ligand>
</feature>
<feature type="binding site" evidence="1">
    <location>
        <position position="214"/>
    </location>
    <ligand>
        <name>FAD</name>
        <dbReference type="ChEBI" id="CHEBI:57692"/>
    </ligand>
</feature>
<feature type="binding site" evidence="1">
    <location>
        <begin position="320"/>
        <end position="341"/>
    </location>
    <ligand>
        <name>FAD</name>
        <dbReference type="ChEBI" id="CHEBI:57692"/>
    </ligand>
</feature>
<feature type="binding site" evidence="1">
    <location>
        <begin position="363"/>
        <end position="382"/>
    </location>
    <ligand>
        <name>FAD</name>
        <dbReference type="ChEBI" id="CHEBI:57692"/>
    </ligand>
</feature>
<feature type="binding site" evidence="1">
    <location>
        <position position="506"/>
    </location>
    <ligand>
        <name>Mg(2+)</name>
        <dbReference type="ChEBI" id="CHEBI:18420"/>
    </ligand>
</feature>
<feature type="binding site" evidence="1">
    <location>
        <position position="533"/>
    </location>
    <ligand>
        <name>Mg(2+)</name>
        <dbReference type="ChEBI" id="CHEBI:18420"/>
    </ligand>
</feature>
<feature type="disulfide bond" evidence="1">
    <location>
        <begin position="132"/>
        <end position="278"/>
    </location>
</feature>